<accession>D2Y284</accession>
<sequence length="113" mass="13142">MNTVRVTFLLVFVLAVSLGQADKDENRMEMQEKTEQGKSYLDFAENLLLQKLEELEAKLLEEDSEESRNSRQKRCIGEGVPCDENDPRCCSGLVRLKPTLHGIWYKSYYCYKK</sequence>
<keyword id="KW-1015">Disulfide bond</keyword>
<keyword id="KW-0872">Ion channel impairing toxin</keyword>
<keyword id="KW-0960">Knottin</keyword>
<keyword id="KW-0964">Secreted</keyword>
<keyword id="KW-0732">Signal</keyword>
<keyword id="KW-0800">Toxin</keyword>
<comment type="function">
    <text evidence="1">Probable ion channel inhibitor.</text>
</comment>
<comment type="subcellular location">
    <subcellularLocation>
        <location evidence="1">Secreted</location>
    </subcellularLocation>
</comment>
<comment type="tissue specificity">
    <text>Expressed by the venom gland.</text>
</comment>
<comment type="domain">
    <text evidence="1">The presence of a 'disulfide through disulfide knot' structurally defines this protein as a knottin.</text>
</comment>
<comment type="similarity">
    <text evidence="4">Belongs to the neurotoxin 14 (magi-1) family. 01 (HNTX-16) subfamily.</text>
</comment>
<comment type="caution">
    <text evidence="4">While it is structurally defined as a knottin it lacks the conserved Cys residue in position 95.</text>
</comment>
<name>H16N1_CYRHA</name>
<dbReference type="EMBL" id="GU292961">
    <property type="protein sequence ID" value="ADB56777.1"/>
    <property type="molecule type" value="mRNA"/>
</dbReference>
<dbReference type="ArachnoServer" id="AS001569">
    <property type="toxin name" value="U11-theraphotoxin-Hhn1n"/>
</dbReference>
<dbReference type="GO" id="GO:0005576">
    <property type="term" value="C:extracellular region"/>
    <property type="evidence" value="ECO:0007669"/>
    <property type="project" value="UniProtKB-SubCell"/>
</dbReference>
<dbReference type="GO" id="GO:0019871">
    <property type="term" value="F:sodium channel inhibitor activity"/>
    <property type="evidence" value="ECO:0007669"/>
    <property type="project" value="InterPro"/>
</dbReference>
<dbReference type="GO" id="GO:0090729">
    <property type="term" value="F:toxin activity"/>
    <property type="evidence" value="ECO:0007669"/>
    <property type="project" value="UniProtKB-KW"/>
</dbReference>
<dbReference type="InterPro" id="IPR012627">
    <property type="entry name" value="Toxin_22"/>
</dbReference>
<dbReference type="Pfam" id="PF08092">
    <property type="entry name" value="Toxin_22"/>
    <property type="match status" value="1"/>
</dbReference>
<proteinExistence type="evidence at transcript level"/>
<feature type="signal peptide" evidence="2">
    <location>
        <begin position="1"/>
        <end position="21"/>
    </location>
</feature>
<feature type="propeptide" id="PRO_0000400943" evidence="1">
    <location>
        <begin position="22"/>
        <end position="74"/>
    </location>
</feature>
<feature type="peptide" id="PRO_0000400944" description="U11-theraphotoxin-Hhn1n">
    <location>
        <begin position="75"/>
        <end position="113"/>
    </location>
</feature>
<feature type="region of interest" description="Disordered" evidence="3">
    <location>
        <begin position="60"/>
        <end position="83"/>
    </location>
</feature>
<feature type="compositionally biased region" description="Basic and acidic residues" evidence="3">
    <location>
        <begin position="60"/>
        <end position="69"/>
    </location>
</feature>
<feature type="disulfide bond" evidence="1">
    <location>
        <begin position="75"/>
        <end position="90"/>
    </location>
</feature>
<feature type="disulfide bond" evidence="1">
    <location>
        <begin position="89"/>
        <end position="110"/>
    </location>
</feature>
<protein>
    <recommendedName>
        <fullName>U11-theraphotoxin-Hhn1n</fullName>
        <shortName>U11-TRTX-Hhn1n</shortName>
    </recommendedName>
    <alternativeName>
        <fullName>Hainantoxin-XVI-14</fullName>
        <shortName>HNTX-XVI-14</shortName>
    </alternativeName>
</protein>
<organism>
    <name type="scientific">Cyriopagopus hainanus</name>
    <name type="common">Chinese bird spider</name>
    <name type="synonym">Haplopelma hainanum</name>
    <dbReference type="NCBI Taxonomy" id="209901"/>
    <lineage>
        <taxon>Eukaryota</taxon>
        <taxon>Metazoa</taxon>
        <taxon>Ecdysozoa</taxon>
        <taxon>Arthropoda</taxon>
        <taxon>Chelicerata</taxon>
        <taxon>Arachnida</taxon>
        <taxon>Araneae</taxon>
        <taxon>Mygalomorphae</taxon>
        <taxon>Theraphosidae</taxon>
        <taxon>Haplopelma</taxon>
    </lineage>
</organism>
<evidence type="ECO:0000250" key="1"/>
<evidence type="ECO:0000255" key="2"/>
<evidence type="ECO:0000256" key="3">
    <source>
        <dbReference type="SAM" id="MobiDB-lite"/>
    </source>
</evidence>
<evidence type="ECO:0000305" key="4"/>
<reference key="1">
    <citation type="journal article" date="2010" name="J. Proteome Res.">
        <title>Molecular diversification of peptide toxins from the tarantula Haplopelma hainanum (Ornithoctonus hainana) venom based on transcriptomic, peptidomic, and genomic analyses.</title>
        <authorList>
            <person name="Tang X."/>
            <person name="Zhang Y."/>
            <person name="Hu W."/>
            <person name="Xu D."/>
            <person name="Tao H."/>
            <person name="Yang X."/>
            <person name="Li Y."/>
            <person name="Jiang L."/>
            <person name="Liang S."/>
        </authorList>
    </citation>
    <scope>NUCLEOTIDE SEQUENCE [LARGE SCALE MRNA]</scope>
    <source>
        <tissue>Venom gland</tissue>
    </source>
</reference>